<reference key="1">
    <citation type="submission" date="2007-10" db="EMBL/GenBank/DDBJ databases">
        <title>Complete sequence of Salinispora arenicola CNS-205.</title>
        <authorList>
            <consortium name="US DOE Joint Genome Institute"/>
            <person name="Copeland A."/>
            <person name="Lucas S."/>
            <person name="Lapidus A."/>
            <person name="Barry K."/>
            <person name="Glavina del Rio T."/>
            <person name="Dalin E."/>
            <person name="Tice H."/>
            <person name="Pitluck S."/>
            <person name="Foster B."/>
            <person name="Schmutz J."/>
            <person name="Larimer F."/>
            <person name="Land M."/>
            <person name="Hauser L."/>
            <person name="Kyrpides N."/>
            <person name="Ivanova N."/>
            <person name="Jensen P.R."/>
            <person name="Moore B.S."/>
            <person name="Penn K."/>
            <person name="Jenkins C."/>
            <person name="Udwary D."/>
            <person name="Xiang L."/>
            <person name="Gontang E."/>
            <person name="Richardson P."/>
        </authorList>
    </citation>
    <scope>NUCLEOTIDE SEQUENCE [LARGE SCALE GENOMIC DNA]</scope>
    <source>
        <strain>CNS-205</strain>
    </source>
</reference>
<accession>A8M723</accession>
<evidence type="ECO:0000255" key="1">
    <source>
        <dbReference type="HAMAP-Rule" id="MF_00159"/>
    </source>
</evidence>
<sequence length="390" mass="40668">MTAVSLGMPAVPPPPLASRRASRQIMVGPVPVGGGAPVSVQSMTTTLTADVNATLQQIAELTAAGCQIVRVAVPSQDDVEALPAIARKSQLPVIADIHFQPRYVFAAIEAGCAAVRVNPGNIRQFDDKVKEIAKAAGDAGVPIRIGVNAGSLDKRLLAKHGKATAEALVESALWECSLFEEHGFRDIKISVKHNDPVVMVRAYRQLAEACDYPLHLGVTEAGPAFQGTVKSAVAFGALLAEGIGDTIRVSLSAPPVEEIKVGTAILESLGLRERGLEIVSCPSCGRAQVDVYKLAEEVTAGLEGLPVPLRVAVMGCVVNGPGEAREADLGVASGNGKGQIFVKGKVIKTVPEGQIVETLIEEALRLADEMGAELPDELRSLVGGATVTVH</sequence>
<gene>
    <name evidence="1" type="primary">ispG</name>
    <name type="ordered locus">Sare_1304</name>
</gene>
<comment type="function">
    <text evidence="1">Converts 2C-methyl-D-erythritol 2,4-cyclodiphosphate (ME-2,4cPP) into 1-hydroxy-2-methyl-2-(E)-butenyl 4-diphosphate.</text>
</comment>
<comment type="catalytic activity">
    <reaction evidence="1">
        <text>(2E)-4-hydroxy-3-methylbut-2-enyl diphosphate + oxidized [flavodoxin] + H2O + 2 H(+) = 2-C-methyl-D-erythritol 2,4-cyclic diphosphate + reduced [flavodoxin]</text>
        <dbReference type="Rhea" id="RHEA:43604"/>
        <dbReference type="Rhea" id="RHEA-COMP:10622"/>
        <dbReference type="Rhea" id="RHEA-COMP:10623"/>
        <dbReference type="ChEBI" id="CHEBI:15377"/>
        <dbReference type="ChEBI" id="CHEBI:15378"/>
        <dbReference type="ChEBI" id="CHEBI:57618"/>
        <dbReference type="ChEBI" id="CHEBI:58210"/>
        <dbReference type="ChEBI" id="CHEBI:58483"/>
        <dbReference type="ChEBI" id="CHEBI:128753"/>
        <dbReference type="EC" id="1.17.7.3"/>
    </reaction>
</comment>
<comment type="cofactor">
    <cofactor evidence="1">
        <name>[4Fe-4S] cluster</name>
        <dbReference type="ChEBI" id="CHEBI:49883"/>
    </cofactor>
    <text evidence="1">Binds 1 [4Fe-4S] cluster.</text>
</comment>
<comment type="pathway">
    <text evidence="1">Isoprenoid biosynthesis; isopentenyl diphosphate biosynthesis via DXP pathway; isopentenyl diphosphate from 1-deoxy-D-xylulose 5-phosphate: step 5/6.</text>
</comment>
<comment type="similarity">
    <text evidence="1">Belongs to the IspG family.</text>
</comment>
<keyword id="KW-0004">4Fe-4S</keyword>
<keyword id="KW-0408">Iron</keyword>
<keyword id="KW-0411">Iron-sulfur</keyword>
<keyword id="KW-0414">Isoprene biosynthesis</keyword>
<keyword id="KW-0479">Metal-binding</keyword>
<keyword id="KW-0560">Oxidoreductase</keyword>
<organism>
    <name type="scientific">Salinispora arenicola (strain CNS-205)</name>
    <dbReference type="NCBI Taxonomy" id="391037"/>
    <lineage>
        <taxon>Bacteria</taxon>
        <taxon>Bacillati</taxon>
        <taxon>Actinomycetota</taxon>
        <taxon>Actinomycetes</taxon>
        <taxon>Micromonosporales</taxon>
        <taxon>Micromonosporaceae</taxon>
        <taxon>Salinispora</taxon>
    </lineage>
</organism>
<protein>
    <recommendedName>
        <fullName evidence="1">4-hydroxy-3-methylbut-2-en-1-yl diphosphate synthase (flavodoxin)</fullName>
        <ecNumber evidence="1">1.17.7.3</ecNumber>
    </recommendedName>
    <alternativeName>
        <fullName evidence="1">1-hydroxy-2-methyl-2-(E)-butenyl 4-diphosphate synthase</fullName>
    </alternativeName>
</protein>
<proteinExistence type="inferred from homology"/>
<dbReference type="EC" id="1.17.7.3" evidence="1"/>
<dbReference type="EMBL" id="CP000850">
    <property type="protein sequence ID" value="ABV97205.1"/>
    <property type="molecule type" value="Genomic_DNA"/>
</dbReference>
<dbReference type="SMR" id="A8M723"/>
<dbReference type="STRING" id="391037.Sare_1304"/>
<dbReference type="KEGG" id="saq:Sare_1304"/>
<dbReference type="PATRIC" id="fig|391037.6.peg.1325"/>
<dbReference type="eggNOG" id="COG0821">
    <property type="taxonomic scope" value="Bacteria"/>
</dbReference>
<dbReference type="HOGENOM" id="CLU_042258_0_0_11"/>
<dbReference type="OrthoDB" id="9803214at2"/>
<dbReference type="UniPathway" id="UPA00056">
    <property type="reaction ID" value="UER00096"/>
</dbReference>
<dbReference type="GO" id="GO:0051539">
    <property type="term" value="F:4 iron, 4 sulfur cluster binding"/>
    <property type="evidence" value="ECO:0007669"/>
    <property type="project" value="UniProtKB-UniRule"/>
</dbReference>
<dbReference type="GO" id="GO:0046429">
    <property type="term" value="F:4-hydroxy-3-methylbut-2-en-1-yl diphosphate synthase activity (ferredoxin)"/>
    <property type="evidence" value="ECO:0007669"/>
    <property type="project" value="UniProtKB-UniRule"/>
</dbReference>
<dbReference type="GO" id="GO:0141197">
    <property type="term" value="F:4-hydroxy-3-methylbut-2-enyl-diphosphate synthase activity (flavodoxin)"/>
    <property type="evidence" value="ECO:0007669"/>
    <property type="project" value="UniProtKB-EC"/>
</dbReference>
<dbReference type="GO" id="GO:0005506">
    <property type="term" value="F:iron ion binding"/>
    <property type="evidence" value="ECO:0007669"/>
    <property type="project" value="InterPro"/>
</dbReference>
<dbReference type="GO" id="GO:0019288">
    <property type="term" value="P:isopentenyl diphosphate biosynthetic process, methylerythritol 4-phosphate pathway"/>
    <property type="evidence" value="ECO:0007669"/>
    <property type="project" value="UniProtKB-UniRule"/>
</dbReference>
<dbReference type="GO" id="GO:0016114">
    <property type="term" value="P:terpenoid biosynthetic process"/>
    <property type="evidence" value="ECO:0007669"/>
    <property type="project" value="InterPro"/>
</dbReference>
<dbReference type="CDD" id="cd00945">
    <property type="entry name" value="Aldolase_Class_I"/>
    <property type="match status" value="1"/>
</dbReference>
<dbReference type="FunFam" id="3.20.20.20:FF:000001">
    <property type="entry name" value="4-hydroxy-3-methylbut-2-en-1-yl diphosphate synthase (flavodoxin)"/>
    <property type="match status" value="1"/>
</dbReference>
<dbReference type="Gene3D" id="3.20.20.20">
    <property type="entry name" value="Dihydropteroate synthase-like"/>
    <property type="match status" value="1"/>
</dbReference>
<dbReference type="Gene3D" id="3.30.413.10">
    <property type="entry name" value="Sulfite Reductase Hemoprotein, domain 1"/>
    <property type="match status" value="1"/>
</dbReference>
<dbReference type="HAMAP" id="MF_00159">
    <property type="entry name" value="IspG"/>
    <property type="match status" value="1"/>
</dbReference>
<dbReference type="InterPro" id="IPR011005">
    <property type="entry name" value="Dihydropteroate_synth-like_sf"/>
</dbReference>
<dbReference type="InterPro" id="IPR016425">
    <property type="entry name" value="IspG_bac"/>
</dbReference>
<dbReference type="InterPro" id="IPR004588">
    <property type="entry name" value="IspG_bac-typ"/>
</dbReference>
<dbReference type="InterPro" id="IPR045854">
    <property type="entry name" value="NO2/SO3_Rdtase_4Fe4S_sf"/>
</dbReference>
<dbReference type="NCBIfam" id="TIGR00612">
    <property type="entry name" value="ispG_gcpE"/>
    <property type="match status" value="1"/>
</dbReference>
<dbReference type="NCBIfam" id="NF001540">
    <property type="entry name" value="PRK00366.1"/>
    <property type="match status" value="1"/>
</dbReference>
<dbReference type="PANTHER" id="PTHR30454">
    <property type="entry name" value="4-HYDROXY-3-METHYLBUT-2-EN-1-YL DIPHOSPHATE SYNTHASE"/>
    <property type="match status" value="1"/>
</dbReference>
<dbReference type="PANTHER" id="PTHR30454:SF0">
    <property type="entry name" value="4-HYDROXY-3-METHYLBUT-2-EN-1-YL DIPHOSPHATE SYNTHASE (FERREDOXIN), CHLOROPLASTIC"/>
    <property type="match status" value="1"/>
</dbReference>
<dbReference type="Pfam" id="PF04551">
    <property type="entry name" value="GcpE"/>
    <property type="match status" value="1"/>
</dbReference>
<dbReference type="PIRSF" id="PIRSF004640">
    <property type="entry name" value="IspG"/>
    <property type="match status" value="1"/>
</dbReference>
<dbReference type="SUPFAM" id="SSF51717">
    <property type="entry name" value="Dihydropteroate synthetase-like"/>
    <property type="match status" value="1"/>
</dbReference>
<dbReference type="SUPFAM" id="SSF56014">
    <property type="entry name" value="Nitrite and sulphite reductase 4Fe-4S domain-like"/>
    <property type="match status" value="1"/>
</dbReference>
<name>ISPG_SALAI</name>
<feature type="chain" id="PRO_1000076895" description="4-hydroxy-3-methylbut-2-en-1-yl diphosphate synthase (flavodoxin)">
    <location>
        <begin position="1"/>
        <end position="390"/>
    </location>
</feature>
<feature type="binding site" evidence="1">
    <location>
        <position position="281"/>
    </location>
    <ligand>
        <name>[4Fe-4S] cluster</name>
        <dbReference type="ChEBI" id="CHEBI:49883"/>
    </ligand>
</feature>
<feature type="binding site" evidence="1">
    <location>
        <position position="284"/>
    </location>
    <ligand>
        <name>[4Fe-4S] cluster</name>
        <dbReference type="ChEBI" id="CHEBI:49883"/>
    </ligand>
</feature>
<feature type="binding site" evidence="1">
    <location>
        <position position="316"/>
    </location>
    <ligand>
        <name>[4Fe-4S] cluster</name>
        <dbReference type="ChEBI" id="CHEBI:49883"/>
    </ligand>
</feature>
<feature type="binding site" evidence="1">
    <location>
        <position position="323"/>
    </location>
    <ligand>
        <name>[4Fe-4S] cluster</name>
        <dbReference type="ChEBI" id="CHEBI:49883"/>
    </ligand>
</feature>